<keyword id="KW-0328">Glycosyltransferase</keyword>
<keyword id="KW-0479">Metal-binding</keyword>
<keyword id="KW-0671">Queuosine biosynthesis</keyword>
<keyword id="KW-1185">Reference proteome</keyword>
<keyword id="KW-0808">Transferase</keyword>
<keyword id="KW-0819">tRNA processing</keyword>
<keyword id="KW-0862">Zinc</keyword>
<organism>
    <name type="scientific">Escherichia coli O1:K1 / APEC</name>
    <dbReference type="NCBI Taxonomy" id="405955"/>
    <lineage>
        <taxon>Bacteria</taxon>
        <taxon>Pseudomonadati</taxon>
        <taxon>Pseudomonadota</taxon>
        <taxon>Gammaproteobacteria</taxon>
        <taxon>Enterobacterales</taxon>
        <taxon>Enterobacteriaceae</taxon>
        <taxon>Escherichia</taxon>
    </lineage>
</organism>
<sequence length="375" mass="42594">MKFELDTTDGRARRGRLVFDRGVVETPCFMPVGTYGTVKGMTPEEVEATGAQIILGNTFHLWLRPGQEIMKLHGDLHDFMQWKGPILTDSGGFQVFSLGDIRKITEQGVHFRNPINGDPIFLDPEKSMEIQYDLGSDIVMIFDECTPYPADWDYAKRSMEMSLRWAKRSRERFDSLGNKNALFGIIQGSVYEDLRDISVKGLVDIGFDGYAVGGLAVGEPKADMHRILEHVCPQIPADKPRYLMGVGKPEDLVEGVRRGIDMFDCVMPTRNARNGHLFVTDGVVKIRNAKYKSDTGPLDPECDCYTCRNYSRAYLHHLDRCNEILGARLNTIHNLRYYQRLMAGLRKAIEEGKLESFVTDFYQRQGREVPPLNVD</sequence>
<evidence type="ECO:0000255" key="1">
    <source>
        <dbReference type="HAMAP-Rule" id="MF_00168"/>
    </source>
</evidence>
<gene>
    <name evidence="1" type="primary">tgt</name>
    <name type="ordered locus">Ecok1_03720</name>
    <name type="ORF">APECO1_1604</name>
</gene>
<name>TGT_ECOK1</name>
<proteinExistence type="inferred from homology"/>
<protein>
    <recommendedName>
        <fullName evidence="1">Queuine tRNA-ribosyltransferase</fullName>
        <ecNumber evidence="1">2.4.2.29</ecNumber>
    </recommendedName>
    <alternativeName>
        <fullName evidence="1">Guanine insertion enzyme</fullName>
    </alternativeName>
    <alternativeName>
        <fullName evidence="1">tRNA-guanine transglycosylase</fullName>
    </alternativeName>
</protein>
<feature type="chain" id="PRO_1000016787" description="Queuine tRNA-ribosyltransferase">
    <location>
        <begin position="1"/>
        <end position="375"/>
    </location>
</feature>
<feature type="region of interest" description="RNA binding" evidence="1">
    <location>
        <begin position="245"/>
        <end position="251"/>
    </location>
</feature>
<feature type="region of interest" description="RNA binding; important for wobble base 34 recognition" evidence="1">
    <location>
        <begin position="269"/>
        <end position="273"/>
    </location>
</feature>
<feature type="active site" description="Proton acceptor" evidence="1">
    <location>
        <position position="89"/>
    </location>
</feature>
<feature type="active site" description="Nucleophile" evidence="1">
    <location>
        <position position="264"/>
    </location>
</feature>
<feature type="binding site" evidence="1">
    <location>
        <begin position="89"/>
        <end position="93"/>
    </location>
    <ligand>
        <name>substrate</name>
    </ligand>
</feature>
<feature type="binding site" evidence="1">
    <location>
        <position position="143"/>
    </location>
    <ligand>
        <name>substrate</name>
    </ligand>
</feature>
<feature type="binding site" evidence="1">
    <location>
        <position position="187"/>
    </location>
    <ligand>
        <name>substrate</name>
    </ligand>
</feature>
<feature type="binding site" evidence="1">
    <location>
        <position position="214"/>
    </location>
    <ligand>
        <name>substrate</name>
    </ligand>
</feature>
<feature type="binding site" evidence="1">
    <location>
        <position position="302"/>
    </location>
    <ligand>
        <name>Zn(2+)</name>
        <dbReference type="ChEBI" id="CHEBI:29105"/>
    </ligand>
</feature>
<feature type="binding site" evidence="1">
    <location>
        <position position="304"/>
    </location>
    <ligand>
        <name>Zn(2+)</name>
        <dbReference type="ChEBI" id="CHEBI:29105"/>
    </ligand>
</feature>
<feature type="binding site" evidence="1">
    <location>
        <position position="307"/>
    </location>
    <ligand>
        <name>Zn(2+)</name>
        <dbReference type="ChEBI" id="CHEBI:29105"/>
    </ligand>
</feature>
<feature type="binding site" evidence="1">
    <location>
        <position position="333"/>
    </location>
    <ligand>
        <name>Zn(2+)</name>
        <dbReference type="ChEBI" id="CHEBI:29105"/>
    </ligand>
</feature>
<dbReference type="EC" id="2.4.2.29" evidence="1"/>
<dbReference type="EMBL" id="CP000468">
    <property type="protein sequence ID" value="ABI99865.1"/>
    <property type="molecule type" value="Genomic_DNA"/>
</dbReference>
<dbReference type="RefSeq" id="WP_000667319.1">
    <property type="nucleotide sequence ID" value="NZ_CADILS010000009.1"/>
</dbReference>
<dbReference type="SMR" id="A1A876"/>
<dbReference type="GeneID" id="93777054"/>
<dbReference type="KEGG" id="ecv:APECO1_1604"/>
<dbReference type="HOGENOM" id="CLU_022060_0_1_6"/>
<dbReference type="UniPathway" id="UPA00392"/>
<dbReference type="Proteomes" id="UP000008216">
    <property type="component" value="Chromosome"/>
</dbReference>
<dbReference type="GO" id="GO:0005829">
    <property type="term" value="C:cytosol"/>
    <property type="evidence" value="ECO:0007669"/>
    <property type="project" value="TreeGrafter"/>
</dbReference>
<dbReference type="GO" id="GO:0046872">
    <property type="term" value="F:metal ion binding"/>
    <property type="evidence" value="ECO:0007669"/>
    <property type="project" value="UniProtKB-KW"/>
</dbReference>
<dbReference type="GO" id="GO:0008479">
    <property type="term" value="F:tRNA-guanosine(34) queuine transglycosylase activity"/>
    <property type="evidence" value="ECO:0007669"/>
    <property type="project" value="UniProtKB-UniRule"/>
</dbReference>
<dbReference type="GO" id="GO:0008616">
    <property type="term" value="P:queuosine biosynthetic process"/>
    <property type="evidence" value="ECO:0007669"/>
    <property type="project" value="UniProtKB-UniRule"/>
</dbReference>
<dbReference type="GO" id="GO:0002099">
    <property type="term" value="P:tRNA wobble guanine modification"/>
    <property type="evidence" value="ECO:0007669"/>
    <property type="project" value="TreeGrafter"/>
</dbReference>
<dbReference type="GO" id="GO:0101030">
    <property type="term" value="P:tRNA-guanine transglycosylation"/>
    <property type="evidence" value="ECO:0007669"/>
    <property type="project" value="InterPro"/>
</dbReference>
<dbReference type="FunFam" id="3.20.20.105:FF:000001">
    <property type="entry name" value="Queuine tRNA-ribosyltransferase"/>
    <property type="match status" value="1"/>
</dbReference>
<dbReference type="Gene3D" id="3.20.20.105">
    <property type="entry name" value="Queuine tRNA-ribosyltransferase-like"/>
    <property type="match status" value="1"/>
</dbReference>
<dbReference type="HAMAP" id="MF_00168">
    <property type="entry name" value="Q_tRNA_Tgt"/>
    <property type="match status" value="1"/>
</dbReference>
<dbReference type="InterPro" id="IPR050076">
    <property type="entry name" value="ArchSynthase1/Queuine_TRR"/>
</dbReference>
<dbReference type="InterPro" id="IPR004803">
    <property type="entry name" value="TGT"/>
</dbReference>
<dbReference type="InterPro" id="IPR036511">
    <property type="entry name" value="TGT-like_sf"/>
</dbReference>
<dbReference type="InterPro" id="IPR002616">
    <property type="entry name" value="tRNA_ribo_trans-like"/>
</dbReference>
<dbReference type="NCBIfam" id="TIGR00430">
    <property type="entry name" value="Q_tRNA_tgt"/>
    <property type="match status" value="1"/>
</dbReference>
<dbReference type="NCBIfam" id="TIGR00449">
    <property type="entry name" value="tgt_general"/>
    <property type="match status" value="1"/>
</dbReference>
<dbReference type="PANTHER" id="PTHR46499">
    <property type="entry name" value="QUEUINE TRNA-RIBOSYLTRANSFERASE"/>
    <property type="match status" value="1"/>
</dbReference>
<dbReference type="PANTHER" id="PTHR46499:SF1">
    <property type="entry name" value="QUEUINE TRNA-RIBOSYLTRANSFERASE"/>
    <property type="match status" value="1"/>
</dbReference>
<dbReference type="Pfam" id="PF01702">
    <property type="entry name" value="TGT"/>
    <property type="match status" value="1"/>
</dbReference>
<dbReference type="SUPFAM" id="SSF51713">
    <property type="entry name" value="tRNA-guanine transglycosylase"/>
    <property type="match status" value="1"/>
</dbReference>
<comment type="function">
    <text evidence="1">Catalyzes the base-exchange of a guanine (G) residue with the queuine precursor 7-aminomethyl-7-deazaguanine (PreQ1) at position 34 (anticodon wobble position) in tRNAs with GU(N) anticodons (tRNA-Asp, -Asn, -His and -Tyr). Catalysis occurs through a double-displacement mechanism. The nucleophile active site attacks the C1' of nucleotide 34 to detach the guanine base from the RNA, forming a covalent enzyme-RNA intermediate. The proton acceptor active site deprotonates the incoming PreQ1, allowing a nucleophilic attack on the C1' of the ribose to form the product. After dissociation, two additional enzymatic reactions on the tRNA convert PreQ1 to queuine (Q), resulting in the hypermodified nucleoside queuosine (7-(((4,5-cis-dihydroxy-2-cyclopenten-1-yl)amino)methyl)-7-deazaguanosine).</text>
</comment>
<comment type="catalytic activity">
    <reaction evidence="1">
        <text>7-aminomethyl-7-carbaguanine + guanosine(34) in tRNA = 7-aminomethyl-7-carbaguanosine(34) in tRNA + guanine</text>
        <dbReference type="Rhea" id="RHEA:24104"/>
        <dbReference type="Rhea" id="RHEA-COMP:10341"/>
        <dbReference type="Rhea" id="RHEA-COMP:10342"/>
        <dbReference type="ChEBI" id="CHEBI:16235"/>
        <dbReference type="ChEBI" id="CHEBI:58703"/>
        <dbReference type="ChEBI" id="CHEBI:74269"/>
        <dbReference type="ChEBI" id="CHEBI:82833"/>
        <dbReference type="EC" id="2.4.2.29"/>
    </reaction>
</comment>
<comment type="cofactor">
    <cofactor evidence="1">
        <name>Zn(2+)</name>
        <dbReference type="ChEBI" id="CHEBI:29105"/>
    </cofactor>
    <text evidence="1">Binds 1 zinc ion per subunit.</text>
</comment>
<comment type="pathway">
    <text evidence="1">tRNA modification; tRNA-queuosine biosynthesis.</text>
</comment>
<comment type="subunit">
    <text evidence="1">Homodimer. Within each dimer, one monomer is responsible for RNA recognition and catalysis, while the other monomer binds to the replacement base PreQ1.</text>
</comment>
<comment type="similarity">
    <text evidence="1">Belongs to the queuine tRNA-ribosyltransferase family.</text>
</comment>
<accession>A1A876</accession>
<reference key="1">
    <citation type="journal article" date="2007" name="J. Bacteriol.">
        <title>The genome sequence of avian pathogenic Escherichia coli strain O1:K1:H7 shares strong similarities with human extraintestinal pathogenic E. coli genomes.</title>
        <authorList>
            <person name="Johnson T.J."/>
            <person name="Kariyawasam S."/>
            <person name="Wannemuehler Y."/>
            <person name="Mangiamele P."/>
            <person name="Johnson S.J."/>
            <person name="Doetkott C."/>
            <person name="Skyberg J.A."/>
            <person name="Lynne A.M."/>
            <person name="Johnson J.R."/>
            <person name="Nolan L.K."/>
        </authorList>
    </citation>
    <scope>NUCLEOTIDE SEQUENCE [LARGE SCALE GENOMIC DNA]</scope>
</reference>